<protein>
    <recommendedName>
        <fullName evidence="1">Large ribosomal subunit protein uL5</fullName>
    </recommendedName>
    <alternativeName>
        <fullName evidence="2">50S ribosomal protein L5</fullName>
    </alternativeName>
</protein>
<dbReference type="EMBL" id="CP001108">
    <property type="protein sequence ID" value="ACF47062.1"/>
    <property type="molecule type" value="Genomic_DNA"/>
</dbReference>
<dbReference type="RefSeq" id="WP_012506594.1">
    <property type="nucleotide sequence ID" value="NC_011059.1"/>
</dbReference>
<dbReference type="SMR" id="B4S5B6"/>
<dbReference type="STRING" id="290512.Paes_2052"/>
<dbReference type="KEGG" id="paa:Paes_2052"/>
<dbReference type="eggNOG" id="COG0094">
    <property type="taxonomic scope" value="Bacteria"/>
</dbReference>
<dbReference type="HOGENOM" id="CLU_061015_2_1_10"/>
<dbReference type="Proteomes" id="UP000002725">
    <property type="component" value="Chromosome"/>
</dbReference>
<dbReference type="GO" id="GO:1990904">
    <property type="term" value="C:ribonucleoprotein complex"/>
    <property type="evidence" value="ECO:0007669"/>
    <property type="project" value="UniProtKB-KW"/>
</dbReference>
<dbReference type="GO" id="GO:0005840">
    <property type="term" value="C:ribosome"/>
    <property type="evidence" value="ECO:0007669"/>
    <property type="project" value="UniProtKB-KW"/>
</dbReference>
<dbReference type="GO" id="GO:0019843">
    <property type="term" value="F:rRNA binding"/>
    <property type="evidence" value="ECO:0007669"/>
    <property type="project" value="UniProtKB-UniRule"/>
</dbReference>
<dbReference type="GO" id="GO:0003735">
    <property type="term" value="F:structural constituent of ribosome"/>
    <property type="evidence" value="ECO:0007669"/>
    <property type="project" value="InterPro"/>
</dbReference>
<dbReference type="GO" id="GO:0000049">
    <property type="term" value="F:tRNA binding"/>
    <property type="evidence" value="ECO:0007669"/>
    <property type="project" value="UniProtKB-UniRule"/>
</dbReference>
<dbReference type="GO" id="GO:0006412">
    <property type="term" value="P:translation"/>
    <property type="evidence" value="ECO:0007669"/>
    <property type="project" value="UniProtKB-UniRule"/>
</dbReference>
<dbReference type="FunFam" id="3.30.1440.10:FF:000001">
    <property type="entry name" value="50S ribosomal protein L5"/>
    <property type="match status" value="1"/>
</dbReference>
<dbReference type="Gene3D" id="3.30.1440.10">
    <property type="match status" value="1"/>
</dbReference>
<dbReference type="HAMAP" id="MF_01333_B">
    <property type="entry name" value="Ribosomal_uL5_B"/>
    <property type="match status" value="1"/>
</dbReference>
<dbReference type="InterPro" id="IPR002132">
    <property type="entry name" value="Ribosomal_uL5"/>
</dbReference>
<dbReference type="InterPro" id="IPR020930">
    <property type="entry name" value="Ribosomal_uL5_bac-type"/>
</dbReference>
<dbReference type="InterPro" id="IPR031309">
    <property type="entry name" value="Ribosomal_uL5_C"/>
</dbReference>
<dbReference type="InterPro" id="IPR022803">
    <property type="entry name" value="Ribosomal_uL5_dom_sf"/>
</dbReference>
<dbReference type="InterPro" id="IPR031310">
    <property type="entry name" value="Ribosomal_uL5_N"/>
</dbReference>
<dbReference type="NCBIfam" id="NF000585">
    <property type="entry name" value="PRK00010.1"/>
    <property type="match status" value="1"/>
</dbReference>
<dbReference type="PANTHER" id="PTHR11994">
    <property type="entry name" value="60S RIBOSOMAL PROTEIN L11-RELATED"/>
    <property type="match status" value="1"/>
</dbReference>
<dbReference type="Pfam" id="PF00281">
    <property type="entry name" value="Ribosomal_L5"/>
    <property type="match status" value="1"/>
</dbReference>
<dbReference type="Pfam" id="PF00673">
    <property type="entry name" value="Ribosomal_L5_C"/>
    <property type="match status" value="1"/>
</dbReference>
<dbReference type="PIRSF" id="PIRSF002161">
    <property type="entry name" value="Ribosomal_L5"/>
    <property type="match status" value="1"/>
</dbReference>
<dbReference type="SUPFAM" id="SSF55282">
    <property type="entry name" value="RL5-like"/>
    <property type="match status" value="1"/>
</dbReference>
<feature type="chain" id="PRO_1000142431" description="Large ribosomal subunit protein uL5">
    <location>
        <begin position="1"/>
        <end position="196"/>
    </location>
</feature>
<gene>
    <name evidence="1" type="primary">rplE</name>
    <name type="ordered locus">Paes_2052</name>
</gene>
<accession>B4S5B6</accession>
<evidence type="ECO:0000255" key="1">
    <source>
        <dbReference type="HAMAP-Rule" id="MF_01333"/>
    </source>
</evidence>
<evidence type="ECO:0000305" key="2"/>
<comment type="function">
    <text evidence="1">This is one of the proteins that bind and probably mediate the attachment of the 5S RNA into the large ribosomal subunit, where it forms part of the central protuberance. In the 70S ribosome it contacts protein S13 of the 30S subunit (bridge B1b), connecting the 2 subunits; this bridge is implicated in subunit movement. Contacts the P site tRNA; the 5S rRNA and some of its associated proteins might help stabilize positioning of ribosome-bound tRNAs.</text>
</comment>
<comment type="subunit">
    <text evidence="1">Part of the 50S ribosomal subunit; part of the 5S rRNA/L5/L18/L25 subcomplex. Contacts the 5S rRNA and the P site tRNA. Forms a bridge to the 30S subunit in the 70S ribosome.</text>
</comment>
<comment type="similarity">
    <text evidence="1">Belongs to the universal ribosomal protein uL5 family.</text>
</comment>
<organism>
    <name type="scientific">Prosthecochloris aestuarii (strain DSM 271 / SK 413)</name>
    <dbReference type="NCBI Taxonomy" id="290512"/>
    <lineage>
        <taxon>Bacteria</taxon>
        <taxon>Pseudomonadati</taxon>
        <taxon>Chlorobiota</taxon>
        <taxon>Chlorobiia</taxon>
        <taxon>Chlorobiales</taxon>
        <taxon>Chlorobiaceae</taxon>
        <taxon>Prosthecochloris</taxon>
    </lineage>
</organism>
<reference key="1">
    <citation type="submission" date="2008-06" db="EMBL/GenBank/DDBJ databases">
        <title>Complete sequence of chromosome of Prosthecochloris aestuarii DSM 271.</title>
        <authorList>
            <consortium name="US DOE Joint Genome Institute"/>
            <person name="Lucas S."/>
            <person name="Copeland A."/>
            <person name="Lapidus A."/>
            <person name="Glavina del Rio T."/>
            <person name="Dalin E."/>
            <person name="Tice H."/>
            <person name="Bruce D."/>
            <person name="Goodwin L."/>
            <person name="Pitluck S."/>
            <person name="Schmutz J."/>
            <person name="Larimer F."/>
            <person name="Land M."/>
            <person name="Hauser L."/>
            <person name="Kyrpides N."/>
            <person name="Anderson I."/>
            <person name="Liu Z."/>
            <person name="Li T."/>
            <person name="Zhao F."/>
            <person name="Overmann J."/>
            <person name="Bryant D.A."/>
            <person name="Richardson P."/>
        </authorList>
    </citation>
    <scope>NUCLEOTIDE SEQUENCE [LARGE SCALE GENOMIC DNA]</scope>
    <source>
        <strain>DSM 271 / SK 413</strain>
    </source>
</reference>
<name>RL5_PROA2</name>
<proteinExistence type="inferred from homology"/>
<sequence length="196" mass="22364">MTKKDEKGSNLDIPVSRLAESYKEKVVPALMERFQYKNIMMVPKLTKISINIGVGEAASEPKLLETAMQELAQITGQKPQIRKARKAISNFKLREGQPIGCRVTLRKKYMYEFLDRFVTLAVPRIRDFRGLSNTSFDGRGNYTLGIREQIIFPEIDIDKVPRIQGMDISFVTTARTDEEAFALLSELGMPFKKKNN</sequence>
<keyword id="KW-0687">Ribonucleoprotein</keyword>
<keyword id="KW-0689">Ribosomal protein</keyword>
<keyword id="KW-0694">RNA-binding</keyword>
<keyword id="KW-0699">rRNA-binding</keyword>
<keyword id="KW-0820">tRNA-binding</keyword>